<gene>
    <name type="primary">rnhA</name>
    <name type="ordered locus">slr0080</name>
</gene>
<evidence type="ECO:0000250" key="1"/>
<evidence type="ECO:0000255" key="2">
    <source>
        <dbReference type="PROSITE-ProRule" id="PRU00408"/>
    </source>
</evidence>
<evidence type="ECO:0000305" key="3"/>
<comment type="function">
    <text evidence="1">Endonuclease that specifically degrades the RNA of RNA-DNA hybrids.</text>
</comment>
<comment type="catalytic activity">
    <reaction>
        <text>Endonucleolytic cleavage to 5'-phosphomonoester.</text>
        <dbReference type="EC" id="3.1.26.4"/>
    </reaction>
</comment>
<comment type="cofactor">
    <cofactor evidence="1">
        <name>Mg(2+)</name>
        <dbReference type="ChEBI" id="CHEBI:18420"/>
    </cofactor>
    <text evidence="1">Binds 1 Mg(2+) ion per subunit. May bind a second metal ion at a regulatory site, or after substrate binding.</text>
</comment>
<comment type="subunit">
    <text evidence="1">Monomer.</text>
</comment>
<comment type="subcellular location">
    <subcellularLocation>
        <location evidence="3">Cytoplasm</location>
    </subcellularLocation>
</comment>
<comment type="similarity">
    <text evidence="3">Belongs to the RNase H family.</text>
</comment>
<accession>Q55801</accession>
<organism>
    <name type="scientific">Synechocystis sp. (strain ATCC 27184 / PCC 6803 / Kazusa)</name>
    <dbReference type="NCBI Taxonomy" id="1111708"/>
    <lineage>
        <taxon>Bacteria</taxon>
        <taxon>Bacillati</taxon>
        <taxon>Cyanobacteriota</taxon>
        <taxon>Cyanophyceae</taxon>
        <taxon>Synechococcales</taxon>
        <taxon>Merismopediaceae</taxon>
        <taxon>Synechocystis</taxon>
    </lineage>
</organism>
<protein>
    <recommendedName>
        <fullName>Ribonuclease HI</fullName>
        <shortName>RNase HI</shortName>
        <ecNumber>3.1.26.4</ecNumber>
    </recommendedName>
</protein>
<feature type="chain" id="PRO_0000195408" description="Ribonuclease HI">
    <location>
        <begin position="1"/>
        <end position="160"/>
    </location>
</feature>
<feature type="domain" description="RNase H type-1" evidence="2">
    <location>
        <begin position="4"/>
        <end position="147"/>
    </location>
</feature>
<feature type="binding site" evidence="1">
    <location>
        <position position="13"/>
    </location>
    <ligand>
        <name>Mg(2+)</name>
        <dbReference type="ChEBI" id="CHEBI:18420"/>
        <label>1</label>
    </ligand>
</feature>
<feature type="binding site" evidence="1">
    <location>
        <position position="13"/>
    </location>
    <ligand>
        <name>Mg(2+)</name>
        <dbReference type="ChEBI" id="CHEBI:18420"/>
        <label>2</label>
    </ligand>
</feature>
<feature type="binding site" evidence="1">
    <location>
        <position position="52"/>
    </location>
    <ligand>
        <name>Mg(2+)</name>
        <dbReference type="ChEBI" id="CHEBI:18420"/>
        <label>1</label>
    </ligand>
</feature>
<feature type="binding site" evidence="1">
    <location>
        <position position="74"/>
    </location>
    <ligand>
        <name>Mg(2+)</name>
        <dbReference type="ChEBI" id="CHEBI:18420"/>
        <label>1</label>
    </ligand>
</feature>
<feature type="binding site" evidence="1">
    <location>
        <position position="139"/>
    </location>
    <ligand>
        <name>Mg(2+)</name>
        <dbReference type="ChEBI" id="CHEBI:18420"/>
        <label>2</label>
    </ligand>
</feature>
<proteinExistence type="inferred from homology"/>
<reference key="1">
    <citation type="journal article" date="1995" name="DNA Res.">
        <title>Sequence analysis of the genome of the unicellular cyanobacterium Synechocystis sp. strain PCC6803. I. Sequence features in the 1 Mb region from map positions 64% to 92% of the genome.</title>
        <authorList>
            <person name="Kaneko T."/>
            <person name="Tanaka A."/>
            <person name="Sato S."/>
            <person name="Kotani H."/>
            <person name="Sazuka T."/>
            <person name="Miyajima N."/>
            <person name="Sugiura M."/>
            <person name="Tabata S."/>
        </authorList>
    </citation>
    <scope>NUCLEOTIDE SEQUENCE [LARGE SCALE GENOMIC DNA]</scope>
    <source>
        <strain>ATCC 27184 / PCC 6803 / N-1</strain>
    </source>
</reference>
<reference key="2">
    <citation type="journal article" date="1996" name="DNA Res.">
        <title>Sequence analysis of the genome of the unicellular cyanobacterium Synechocystis sp. strain PCC6803. II. Sequence determination of the entire genome and assignment of potential protein-coding regions.</title>
        <authorList>
            <person name="Kaneko T."/>
            <person name="Sato S."/>
            <person name="Kotani H."/>
            <person name="Tanaka A."/>
            <person name="Asamizu E."/>
            <person name="Nakamura Y."/>
            <person name="Miyajima N."/>
            <person name="Hirosawa M."/>
            <person name="Sugiura M."/>
            <person name="Sasamoto S."/>
            <person name="Kimura T."/>
            <person name="Hosouchi T."/>
            <person name="Matsuno A."/>
            <person name="Muraki A."/>
            <person name="Nakazaki N."/>
            <person name="Naruo K."/>
            <person name="Okumura S."/>
            <person name="Shimpo S."/>
            <person name="Takeuchi C."/>
            <person name="Wada T."/>
            <person name="Watanabe A."/>
            <person name="Yamada M."/>
            <person name="Yasuda M."/>
            <person name="Tabata S."/>
        </authorList>
    </citation>
    <scope>NUCLEOTIDE SEQUENCE [LARGE SCALE GENOMIC DNA]</scope>
    <source>
        <strain>ATCC 27184 / PCC 6803 / Kazusa</strain>
    </source>
</reference>
<dbReference type="EC" id="3.1.26.4"/>
<dbReference type="EMBL" id="BA000022">
    <property type="protein sequence ID" value="BAA10553.1"/>
    <property type="molecule type" value="Genomic_DNA"/>
</dbReference>
<dbReference type="PIR" id="S76609">
    <property type="entry name" value="S76609"/>
</dbReference>
<dbReference type="SMR" id="Q55801"/>
<dbReference type="IntAct" id="Q55801">
    <property type="interactions" value="1"/>
</dbReference>
<dbReference type="STRING" id="1148.gene:10500057"/>
<dbReference type="PaxDb" id="1148-1001716"/>
<dbReference type="EnsemblBacteria" id="BAA10553">
    <property type="protein sequence ID" value="BAA10553"/>
    <property type="gene ID" value="BAA10553"/>
</dbReference>
<dbReference type="KEGG" id="syn:slr0080"/>
<dbReference type="eggNOG" id="COG0328">
    <property type="taxonomic scope" value="Bacteria"/>
</dbReference>
<dbReference type="InParanoid" id="Q55801"/>
<dbReference type="PhylomeDB" id="Q55801"/>
<dbReference type="Proteomes" id="UP000001425">
    <property type="component" value="Chromosome"/>
</dbReference>
<dbReference type="GO" id="GO:0005737">
    <property type="term" value="C:cytoplasm"/>
    <property type="evidence" value="ECO:0007669"/>
    <property type="project" value="UniProtKB-SubCell"/>
</dbReference>
<dbReference type="GO" id="GO:0000287">
    <property type="term" value="F:magnesium ion binding"/>
    <property type="evidence" value="ECO:0007669"/>
    <property type="project" value="UniProtKB-UniRule"/>
</dbReference>
<dbReference type="GO" id="GO:0003676">
    <property type="term" value="F:nucleic acid binding"/>
    <property type="evidence" value="ECO:0007669"/>
    <property type="project" value="InterPro"/>
</dbReference>
<dbReference type="GO" id="GO:0004523">
    <property type="term" value="F:RNA-DNA hybrid ribonuclease activity"/>
    <property type="evidence" value="ECO:0000318"/>
    <property type="project" value="GO_Central"/>
</dbReference>
<dbReference type="GO" id="GO:0043137">
    <property type="term" value="P:DNA replication, removal of RNA primer"/>
    <property type="evidence" value="ECO:0000318"/>
    <property type="project" value="GO_Central"/>
</dbReference>
<dbReference type="CDD" id="cd09278">
    <property type="entry name" value="RNase_HI_prokaryote_like"/>
    <property type="match status" value="1"/>
</dbReference>
<dbReference type="FunFam" id="3.30.420.10:FF:000089">
    <property type="entry name" value="Ribonuclease H"/>
    <property type="match status" value="1"/>
</dbReference>
<dbReference type="Gene3D" id="3.30.420.10">
    <property type="entry name" value="Ribonuclease H-like superfamily/Ribonuclease H"/>
    <property type="match status" value="1"/>
</dbReference>
<dbReference type="HAMAP" id="MF_00042">
    <property type="entry name" value="RNase_H"/>
    <property type="match status" value="1"/>
</dbReference>
<dbReference type="InterPro" id="IPR050092">
    <property type="entry name" value="RNase_H"/>
</dbReference>
<dbReference type="InterPro" id="IPR012337">
    <property type="entry name" value="RNaseH-like_sf"/>
</dbReference>
<dbReference type="InterPro" id="IPR002156">
    <property type="entry name" value="RNaseH_domain"/>
</dbReference>
<dbReference type="InterPro" id="IPR036397">
    <property type="entry name" value="RNaseH_sf"/>
</dbReference>
<dbReference type="InterPro" id="IPR022892">
    <property type="entry name" value="RNaseHI"/>
</dbReference>
<dbReference type="NCBIfam" id="NF001236">
    <property type="entry name" value="PRK00203.1"/>
    <property type="match status" value="1"/>
</dbReference>
<dbReference type="PANTHER" id="PTHR10642">
    <property type="entry name" value="RIBONUCLEASE H1"/>
    <property type="match status" value="1"/>
</dbReference>
<dbReference type="PANTHER" id="PTHR10642:SF26">
    <property type="entry name" value="RIBONUCLEASE H1"/>
    <property type="match status" value="1"/>
</dbReference>
<dbReference type="Pfam" id="PF00075">
    <property type="entry name" value="RNase_H"/>
    <property type="match status" value="1"/>
</dbReference>
<dbReference type="SUPFAM" id="SSF53098">
    <property type="entry name" value="Ribonuclease H-like"/>
    <property type="match status" value="1"/>
</dbReference>
<dbReference type="PROSITE" id="PS50879">
    <property type="entry name" value="RNASE_H_1"/>
    <property type="match status" value="1"/>
</dbReference>
<sequence>MASTPNSVTLYTDGACSMNPGPGGYGAVILYGDGRREELSAGYKMTTNNRMEIMGAIAALSHLQEPSQVLLYTDSRYMVDAMSKGWAKKWKANGWQRNAKEKAKNPDLWETMLTLCEKHQVTFQWVKAHAGNKENERCDRLAVAAYQNNPNLVDEGFGKF</sequence>
<keyword id="KW-0963">Cytoplasm</keyword>
<keyword id="KW-0255">Endonuclease</keyword>
<keyword id="KW-0378">Hydrolase</keyword>
<keyword id="KW-0460">Magnesium</keyword>
<keyword id="KW-0479">Metal-binding</keyword>
<keyword id="KW-0540">Nuclease</keyword>
<keyword id="KW-1185">Reference proteome</keyword>
<name>RNH_SYNY3</name>